<keyword id="KW-0963">Cytoplasm</keyword>
<keyword id="KW-0507">mRNA processing</keyword>
<keyword id="KW-0508">mRNA splicing</keyword>
<keyword id="KW-0509">mRNA transport</keyword>
<keyword id="KW-0866">Nonsense-mediated mRNA decay</keyword>
<keyword id="KW-0539">Nucleus</keyword>
<keyword id="KW-0694">RNA-binding</keyword>
<keyword id="KW-0943">RNA-mediated gene silencing</keyword>
<keyword id="KW-0810">Translation regulation</keyword>
<keyword id="KW-0813">Transport</keyword>
<dbReference type="EMBL" id="DQ359156">
    <property type="protein sequence ID" value="ABC87764.1"/>
    <property type="molecule type" value="mRNA"/>
</dbReference>
<dbReference type="SMR" id="A2SW84"/>
<dbReference type="GO" id="GO:0005737">
    <property type="term" value="C:cytoplasm"/>
    <property type="evidence" value="ECO:0007669"/>
    <property type="project" value="UniProtKB-SubCell"/>
</dbReference>
<dbReference type="GO" id="GO:0005846">
    <property type="term" value="C:nuclear cap binding complex"/>
    <property type="evidence" value="ECO:0007669"/>
    <property type="project" value="InterPro"/>
</dbReference>
<dbReference type="GO" id="GO:0005634">
    <property type="term" value="C:nucleus"/>
    <property type="evidence" value="ECO:0007669"/>
    <property type="project" value="UniProtKB-SubCell"/>
</dbReference>
<dbReference type="GO" id="GO:0003729">
    <property type="term" value="F:mRNA binding"/>
    <property type="evidence" value="ECO:0000250"/>
    <property type="project" value="UniProtKB"/>
</dbReference>
<dbReference type="GO" id="GO:0000340">
    <property type="term" value="F:RNA 7-methylguanosine cap binding"/>
    <property type="evidence" value="ECO:0000250"/>
    <property type="project" value="UniProtKB"/>
</dbReference>
<dbReference type="GO" id="GO:0017069">
    <property type="term" value="F:snRNA binding"/>
    <property type="evidence" value="ECO:0000250"/>
    <property type="project" value="UniProtKB"/>
</dbReference>
<dbReference type="GO" id="GO:0045292">
    <property type="term" value="P:mRNA cis splicing, via spliceosome"/>
    <property type="evidence" value="ECO:0000250"/>
    <property type="project" value="UniProtKB"/>
</dbReference>
<dbReference type="GO" id="GO:0051028">
    <property type="term" value="P:mRNA transport"/>
    <property type="evidence" value="ECO:0007669"/>
    <property type="project" value="UniProtKB-KW"/>
</dbReference>
<dbReference type="GO" id="GO:0000184">
    <property type="term" value="P:nuclear-transcribed mRNA catabolic process, nonsense-mediated decay"/>
    <property type="evidence" value="ECO:0007669"/>
    <property type="project" value="UniProtKB-KW"/>
</dbReference>
<dbReference type="GO" id="GO:0046833">
    <property type="term" value="P:positive regulation of RNA export from nucleus"/>
    <property type="evidence" value="ECO:0000250"/>
    <property type="project" value="UniProtKB"/>
</dbReference>
<dbReference type="GO" id="GO:0006417">
    <property type="term" value="P:regulation of translation"/>
    <property type="evidence" value="ECO:0007669"/>
    <property type="project" value="UniProtKB-KW"/>
</dbReference>
<dbReference type="GO" id="GO:0031047">
    <property type="term" value="P:regulatory ncRNA-mediated gene silencing"/>
    <property type="evidence" value="ECO:0007669"/>
    <property type="project" value="UniProtKB-KW"/>
</dbReference>
<dbReference type="GO" id="GO:0008380">
    <property type="term" value="P:RNA splicing"/>
    <property type="evidence" value="ECO:0000250"/>
    <property type="project" value="UniProtKB"/>
</dbReference>
<dbReference type="GO" id="GO:0006408">
    <property type="term" value="P:snRNA export from nucleus"/>
    <property type="evidence" value="ECO:0000250"/>
    <property type="project" value="UniProtKB"/>
</dbReference>
<dbReference type="CDD" id="cd12240">
    <property type="entry name" value="RRM_NCBP2"/>
    <property type="match status" value="1"/>
</dbReference>
<dbReference type="FunFam" id="3.30.70.330:FF:000128">
    <property type="entry name" value="Nuclear cap-binding protein subunit 2"/>
    <property type="match status" value="1"/>
</dbReference>
<dbReference type="Gene3D" id="3.30.70.330">
    <property type="match status" value="1"/>
</dbReference>
<dbReference type="InterPro" id="IPR027157">
    <property type="entry name" value="NCBP2"/>
</dbReference>
<dbReference type="InterPro" id="IPR034148">
    <property type="entry name" value="NCBP2_RRM"/>
</dbReference>
<dbReference type="InterPro" id="IPR012677">
    <property type="entry name" value="Nucleotide-bd_a/b_plait_sf"/>
</dbReference>
<dbReference type="InterPro" id="IPR035979">
    <property type="entry name" value="RBD_domain_sf"/>
</dbReference>
<dbReference type="InterPro" id="IPR000504">
    <property type="entry name" value="RRM_dom"/>
</dbReference>
<dbReference type="PANTHER" id="PTHR18847">
    <property type="entry name" value="20 KD NUCLEAR CAP BINDING PROTEIN"/>
    <property type="match status" value="1"/>
</dbReference>
<dbReference type="PANTHER" id="PTHR18847:SF0">
    <property type="entry name" value="NUCLEAR CAP-BINDING PROTEIN SUBUNIT 2"/>
    <property type="match status" value="1"/>
</dbReference>
<dbReference type="Pfam" id="PF00076">
    <property type="entry name" value="RRM_1"/>
    <property type="match status" value="1"/>
</dbReference>
<dbReference type="SMART" id="SM00360">
    <property type="entry name" value="RRM"/>
    <property type="match status" value="1"/>
</dbReference>
<dbReference type="SUPFAM" id="SSF54928">
    <property type="entry name" value="RNA-binding domain, RBD"/>
    <property type="match status" value="1"/>
</dbReference>
<dbReference type="PROSITE" id="PS50102">
    <property type="entry name" value="RRM"/>
    <property type="match status" value="1"/>
</dbReference>
<sequence length="165" mass="19040">MSVKLNALTSDSYIDVSQYRDQHFKGNRYDQEKLLKQSHTLYVGNLSFYTTEEQVHELFSKSGDVKRIIIGLDKVKKTACGFCFVEYYTRAGAENAMRFINGTRLDDRIIRADWDAGFKEGRQYGRGKSGGQVRDEYRQDYDPARGGYGKLAQQHRPTEAIRNTF</sequence>
<proteinExistence type="evidence at transcript level"/>
<reference key="1">
    <citation type="submission" date="2006-01" db="EMBL/GenBank/DDBJ databases">
        <title>Molecular cloning of mandarin fish nuclear cap binding protein.</title>
        <authorList>
            <person name="Ren R.-W."/>
            <person name="Yin Z.-X."/>
            <person name="He W."/>
            <person name="He J.-G."/>
        </authorList>
    </citation>
    <scope>NUCLEOTIDE SEQUENCE [MRNA]</scope>
</reference>
<organism>
    <name type="scientific">Siniperca chuatsi</name>
    <name type="common">Mandarin fish</name>
    <dbReference type="NCBI Taxonomy" id="119488"/>
    <lineage>
        <taxon>Eukaryota</taxon>
        <taxon>Metazoa</taxon>
        <taxon>Chordata</taxon>
        <taxon>Craniata</taxon>
        <taxon>Vertebrata</taxon>
        <taxon>Euteleostomi</taxon>
        <taxon>Actinopterygii</taxon>
        <taxon>Neopterygii</taxon>
        <taxon>Teleostei</taxon>
        <taxon>Neoteleostei</taxon>
        <taxon>Acanthomorphata</taxon>
        <taxon>Eupercaria</taxon>
        <taxon>Centrarchiformes</taxon>
        <taxon>Centrarchoidei</taxon>
        <taxon>Sinipercidae</taxon>
        <taxon>Siniperca</taxon>
    </lineage>
</organism>
<gene>
    <name type="primary">ncbp2</name>
    <name type="synonym">cbp20</name>
</gene>
<name>NCBP2_SINCH</name>
<accession>A2SW84</accession>
<comment type="function">
    <text evidence="2">Component of the cap-binding complex (CBC), which binds co-transcriptionally to the 5' cap of pre-mRNAs and is involved in various processes such as pre-mRNA splicing, translation regulation, nonsense-mediated mRNA decay, RNA-mediated gene silencing (RNAi) by microRNAs (miRNAs) and mRNA export. The CBC complex is involved in mRNA export from the nucleus, leading to the recruitment of the mRNA export machinery to the 5' end of mRNA and to mRNA export in a 5' to 3' direction through the nuclear pore. The CBC complex is also involved in mediating U snRNA and intronless mRNAs export from the nucleus. The CBC complex is essential for a pioneer round of mRNA translation, before steady state translation when the CBC complex is replaced by cytoplasmic cap-binding protein eIF4E. The pioneer round of mRNA translation mediated by the CBC complex plays a central role in nonsense-mediated mRNA decay (NMD), NMD only taking place in mRNAs bound to the CBC complex, but not on eIF4E-bound mRNAs. The CBC complex enhances NMD in mRNAs containing at least one exon-junction complex (EJC), promoting the interaction between upf1 and upf2. The CBC complex is also involved in 'failsafe' NMD, which is independent of the EJC complex, while it does not participate in Staufen-mediated mRNA decay (SMD). During cell proliferation, the CBC complex is also involved in microRNAs (miRNAs) biogenesis via its interaction with srrt/ars2, thereby being required for miRNA-mediated RNA interference. The CBC complex also acts as a negative regulator of parn, thereby acting as an inhibitor of mRNA deadenylation. In the CBC complex, ncbp2/cbp20 recognizes and binds capped RNAs (m7GpppG-capped RNA) but requires ncbp1/cbp80 to stabilize the movement of its N-terminal loop and lock the CBC into a high affinity cap-binding state with the cap structure. The conventional cap-binding complex with NCBP2 binds both small nuclear RNA (snRNA) and messenger (mRNA) and is involved in their export from the nucleus (By similarity).</text>
</comment>
<comment type="subunit">
    <text evidence="2">Component of the nuclear cap-binding complex (CBC), a heterodimer composed of ncbp1/cbp80 and ncbp2/cbp20 that interacts with m7GpppG-capped RNA.</text>
</comment>
<comment type="subcellular location">
    <subcellularLocation>
        <location evidence="2">Nucleus</location>
    </subcellularLocation>
    <subcellularLocation>
        <location evidence="2">Cytoplasm</location>
    </subcellularLocation>
</comment>
<comment type="similarity">
    <text evidence="5">Belongs to the RRM NCBP2 family.</text>
</comment>
<protein>
    <recommendedName>
        <fullName>Nuclear cap-binding protein subunit 2</fullName>
    </recommendedName>
    <alternativeName>
        <fullName>20 kDa nuclear cap-binding protein</fullName>
    </alternativeName>
    <alternativeName>
        <fullName>NCBP 20 kDa subunit</fullName>
        <shortName>CBP20</shortName>
    </alternativeName>
</protein>
<evidence type="ECO:0000250" key="1"/>
<evidence type="ECO:0000250" key="2">
    <source>
        <dbReference type="UniProtKB" id="P52298"/>
    </source>
</evidence>
<evidence type="ECO:0000255" key="3">
    <source>
        <dbReference type="PROSITE-ProRule" id="PRU00176"/>
    </source>
</evidence>
<evidence type="ECO:0000256" key="4">
    <source>
        <dbReference type="SAM" id="MobiDB-lite"/>
    </source>
</evidence>
<evidence type="ECO:0000305" key="5"/>
<feature type="chain" id="PRO_0000385254" description="Nuclear cap-binding protein subunit 2">
    <location>
        <begin position="1"/>
        <end position="165"/>
    </location>
</feature>
<feature type="domain" description="RRM" evidence="3">
    <location>
        <begin position="39"/>
        <end position="117"/>
    </location>
</feature>
<feature type="region of interest" description="Disordered" evidence="4">
    <location>
        <begin position="144"/>
        <end position="165"/>
    </location>
</feature>
<feature type="binding site" evidence="1">
    <location>
        <position position="19"/>
    </location>
    <ligand>
        <name>mRNA</name>
        <dbReference type="ChEBI" id="CHEBI:33699"/>
    </ligand>
    <ligandPart>
        <name>mRNA cap</name>
    </ligandPart>
</feature>
<feature type="binding site" evidence="1">
    <location>
        <position position="42"/>
    </location>
    <ligand>
        <name>mRNA</name>
        <dbReference type="ChEBI" id="CHEBI:33699"/>
    </ligand>
    <ligandPart>
        <name>mRNA cap</name>
    </ligandPart>
</feature>
<feature type="binding site" evidence="1">
    <location>
        <begin position="111"/>
        <end position="115"/>
    </location>
    <ligand>
        <name>mRNA</name>
        <dbReference type="ChEBI" id="CHEBI:33699"/>
    </ligand>
    <ligandPart>
        <name>mRNA cap</name>
    </ligandPart>
</feature>
<feature type="binding site" evidence="1">
    <location>
        <begin position="122"/>
        <end position="126"/>
    </location>
    <ligand>
        <name>mRNA</name>
        <dbReference type="ChEBI" id="CHEBI:33699"/>
    </ligand>
    <ligandPart>
        <name>mRNA cap</name>
    </ligandPart>
</feature>
<feature type="binding site" evidence="1">
    <location>
        <begin position="132"/>
        <end position="133"/>
    </location>
    <ligand>
        <name>mRNA</name>
        <dbReference type="ChEBI" id="CHEBI:33699"/>
    </ligand>
    <ligandPart>
        <name>mRNA cap</name>
    </ligandPart>
</feature>